<feature type="chain" id="PRO_1000017843" description="Peptidase T">
    <location>
        <begin position="1"/>
        <end position="407"/>
    </location>
</feature>
<feature type="active site" evidence="1">
    <location>
        <position position="80"/>
    </location>
</feature>
<feature type="active site" description="Proton acceptor" evidence="1">
    <location>
        <position position="175"/>
    </location>
</feature>
<feature type="binding site" evidence="1">
    <location>
        <position position="78"/>
    </location>
    <ligand>
        <name>Zn(2+)</name>
        <dbReference type="ChEBI" id="CHEBI:29105"/>
        <label>1</label>
    </ligand>
</feature>
<feature type="binding site" evidence="1">
    <location>
        <position position="141"/>
    </location>
    <ligand>
        <name>Zn(2+)</name>
        <dbReference type="ChEBI" id="CHEBI:29105"/>
        <label>1</label>
    </ligand>
</feature>
<feature type="binding site" evidence="1">
    <location>
        <position position="141"/>
    </location>
    <ligand>
        <name>Zn(2+)</name>
        <dbReference type="ChEBI" id="CHEBI:29105"/>
        <label>2</label>
    </ligand>
</feature>
<feature type="binding site" evidence="1">
    <location>
        <position position="176"/>
    </location>
    <ligand>
        <name>Zn(2+)</name>
        <dbReference type="ChEBI" id="CHEBI:29105"/>
        <label>2</label>
    </ligand>
</feature>
<feature type="binding site" evidence="1">
    <location>
        <position position="198"/>
    </location>
    <ligand>
        <name>Zn(2+)</name>
        <dbReference type="ChEBI" id="CHEBI:29105"/>
        <label>1</label>
    </ligand>
</feature>
<feature type="binding site" evidence="1">
    <location>
        <position position="380"/>
    </location>
    <ligand>
        <name>Zn(2+)</name>
        <dbReference type="ChEBI" id="CHEBI:29105"/>
        <label>2</label>
    </ligand>
</feature>
<accession>A0Q3I1</accession>
<dbReference type="EC" id="3.4.11.4" evidence="1"/>
<dbReference type="EMBL" id="CP000382">
    <property type="protein sequence ID" value="ABK62613.1"/>
    <property type="molecule type" value="Genomic_DNA"/>
</dbReference>
<dbReference type="RefSeq" id="WP_011723161.1">
    <property type="nucleotide sequence ID" value="NC_008593.1"/>
</dbReference>
<dbReference type="SMR" id="A0Q3I1"/>
<dbReference type="STRING" id="386415.NT01CX_0717"/>
<dbReference type="MEROPS" id="M20.003"/>
<dbReference type="KEGG" id="cno:NT01CX_0717"/>
<dbReference type="PATRIC" id="fig|386415.7.peg.2222"/>
<dbReference type="eggNOG" id="COG2195">
    <property type="taxonomic scope" value="Bacteria"/>
</dbReference>
<dbReference type="HOGENOM" id="CLU_053676_0_0_9"/>
<dbReference type="Proteomes" id="UP000008220">
    <property type="component" value="Chromosome"/>
</dbReference>
<dbReference type="GO" id="GO:0005829">
    <property type="term" value="C:cytosol"/>
    <property type="evidence" value="ECO:0007669"/>
    <property type="project" value="TreeGrafter"/>
</dbReference>
<dbReference type="GO" id="GO:0008237">
    <property type="term" value="F:metallopeptidase activity"/>
    <property type="evidence" value="ECO:0007669"/>
    <property type="project" value="UniProtKB-KW"/>
</dbReference>
<dbReference type="GO" id="GO:0045148">
    <property type="term" value="F:tripeptide aminopeptidase activity"/>
    <property type="evidence" value="ECO:0007669"/>
    <property type="project" value="UniProtKB-UniRule"/>
</dbReference>
<dbReference type="GO" id="GO:0008270">
    <property type="term" value="F:zinc ion binding"/>
    <property type="evidence" value="ECO:0007669"/>
    <property type="project" value="UniProtKB-UniRule"/>
</dbReference>
<dbReference type="GO" id="GO:0043171">
    <property type="term" value="P:peptide catabolic process"/>
    <property type="evidence" value="ECO:0007669"/>
    <property type="project" value="UniProtKB-UniRule"/>
</dbReference>
<dbReference type="GO" id="GO:0006508">
    <property type="term" value="P:proteolysis"/>
    <property type="evidence" value="ECO:0007669"/>
    <property type="project" value="UniProtKB-UniRule"/>
</dbReference>
<dbReference type="CDD" id="cd03892">
    <property type="entry name" value="M20_peptT"/>
    <property type="match status" value="1"/>
</dbReference>
<dbReference type="FunFam" id="3.30.70.360:FF:000002">
    <property type="entry name" value="Peptidase T"/>
    <property type="match status" value="1"/>
</dbReference>
<dbReference type="Gene3D" id="3.30.70.360">
    <property type="match status" value="1"/>
</dbReference>
<dbReference type="Gene3D" id="3.40.630.10">
    <property type="entry name" value="Zn peptidases"/>
    <property type="match status" value="1"/>
</dbReference>
<dbReference type="HAMAP" id="MF_00550">
    <property type="entry name" value="Aminopeptidase_M20"/>
    <property type="match status" value="1"/>
</dbReference>
<dbReference type="InterPro" id="IPR001261">
    <property type="entry name" value="ArgE/DapE_CS"/>
</dbReference>
<dbReference type="InterPro" id="IPR036264">
    <property type="entry name" value="Bact_exopeptidase_dim_dom"/>
</dbReference>
<dbReference type="InterPro" id="IPR002933">
    <property type="entry name" value="Peptidase_M20"/>
</dbReference>
<dbReference type="InterPro" id="IPR011650">
    <property type="entry name" value="Peptidase_M20_dimer"/>
</dbReference>
<dbReference type="InterPro" id="IPR010161">
    <property type="entry name" value="Peptidase_M20B"/>
</dbReference>
<dbReference type="NCBIfam" id="TIGR01882">
    <property type="entry name" value="peptidase-T"/>
    <property type="match status" value="1"/>
</dbReference>
<dbReference type="NCBIfam" id="NF003976">
    <property type="entry name" value="PRK05469.1"/>
    <property type="match status" value="1"/>
</dbReference>
<dbReference type="NCBIfam" id="NF009920">
    <property type="entry name" value="PRK13381.1"/>
    <property type="match status" value="1"/>
</dbReference>
<dbReference type="PANTHER" id="PTHR42994">
    <property type="entry name" value="PEPTIDASE T"/>
    <property type="match status" value="1"/>
</dbReference>
<dbReference type="PANTHER" id="PTHR42994:SF1">
    <property type="entry name" value="PEPTIDASE T"/>
    <property type="match status" value="1"/>
</dbReference>
<dbReference type="Pfam" id="PF07687">
    <property type="entry name" value="M20_dimer"/>
    <property type="match status" value="1"/>
</dbReference>
<dbReference type="Pfam" id="PF01546">
    <property type="entry name" value="Peptidase_M20"/>
    <property type="match status" value="1"/>
</dbReference>
<dbReference type="PIRSF" id="PIRSF037215">
    <property type="entry name" value="Peptidase_M20B"/>
    <property type="match status" value="1"/>
</dbReference>
<dbReference type="SUPFAM" id="SSF55031">
    <property type="entry name" value="Bacterial exopeptidase dimerisation domain"/>
    <property type="match status" value="1"/>
</dbReference>
<dbReference type="SUPFAM" id="SSF53187">
    <property type="entry name" value="Zn-dependent exopeptidases"/>
    <property type="match status" value="1"/>
</dbReference>
<dbReference type="PROSITE" id="PS00758">
    <property type="entry name" value="ARGE_DAPE_CPG2_1"/>
    <property type="match status" value="1"/>
</dbReference>
<dbReference type="PROSITE" id="PS00759">
    <property type="entry name" value="ARGE_DAPE_CPG2_2"/>
    <property type="match status" value="1"/>
</dbReference>
<keyword id="KW-0031">Aminopeptidase</keyword>
<keyword id="KW-0963">Cytoplasm</keyword>
<keyword id="KW-0378">Hydrolase</keyword>
<keyword id="KW-0479">Metal-binding</keyword>
<keyword id="KW-0482">Metalloprotease</keyword>
<keyword id="KW-0645">Protease</keyword>
<keyword id="KW-1185">Reference proteome</keyword>
<keyword id="KW-0862">Zinc</keyword>
<evidence type="ECO:0000255" key="1">
    <source>
        <dbReference type="HAMAP-Rule" id="MF_00550"/>
    </source>
</evidence>
<organism>
    <name type="scientific">Clostridium novyi (strain NT)</name>
    <dbReference type="NCBI Taxonomy" id="386415"/>
    <lineage>
        <taxon>Bacteria</taxon>
        <taxon>Bacillati</taxon>
        <taxon>Bacillota</taxon>
        <taxon>Clostridia</taxon>
        <taxon>Eubacteriales</taxon>
        <taxon>Clostridiaceae</taxon>
        <taxon>Clostridium</taxon>
    </lineage>
</organism>
<sequence>MEAVVNKFLKYISFDTKSNEDSNAHPSTEGQMVLAKELARELKEMGMIDVSVDSKAYVMATLPANTENHVPTIGFIAHMDTAPDMSGKDVKPQFVENYDGKDIILNKEKNIVLKVKDFPEIKDYIGKTLITTDGTTLLGADDKAGVAEIMTAMEHLINHPEIKHGTVKIAFTPDEEIGAGADYFDVEKFNADFAYTVDGGTVGELEYENFNAAGVKLTIHGRNVHPGSAKDKMINSITVGNELHSMLPENEVPEHTEGYEGFYHIVAFNGTVEETKMQYIIRDFDRKKFEERKATMQKVVDTLNSKYGEGTVELQMNDQYYNMKEKVEPVHHIVDTAFKAIEEVGLVPKVVPIRGGTDGARLSFMGLPTPNLFTGGHNFHGKFEFIPTFAMSKAVDVILKIIELYSK</sequence>
<gene>
    <name evidence="1" type="primary">pepT</name>
    <name type="ordered locus">NT01CX_0717</name>
</gene>
<reference key="1">
    <citation type="journal article" date="2006" name="Nat. Biotechnol.">
        <title>The genome and transcriptomes of the anti-tumor agent Clostridium novyi-NT.</title>
        <authorList>
            <person name="Bettegowda C."/>
            <person name="Huang X."/>
            <person name="Lin J."/>
            <person name="Cheong I."/>
            <person name="Kohli M."/>
            <person name="Szabo S.A."/>
            <person name="Zhang X."/>
            <person name="Diaz L.A. Jr."/>
            <person name="Velculescu V.E."/>
            <person name="Parmigiani G."/>
            <person name="Kinzler K.W."/>
            <person name="Vogelstein B."/>
            <person name="Zhou S."/>
        </authorList>
    </citation>
    <scope>NUCLEOTIDE SEQUENCE [LARGE SCALE GENOMIC DNA]</scope>
    <source>
        <strain>NT</strain>
    </source>
</reference>
<proteinExistence type="inferred from homology"/>
<protein>
    <recommendedName>
        <fullName evidence="1">Peptidase T</fullName>
        <ecNumber evidence="1">3.4.11.4</ecNumber>
    </recommendedName>
    <alternativeName>
        <fullName evidence="1">Aminotripeptidase</fullName>
        <shortName evidence="1">Tripeptidase</shortName>
    </alternativeName>
    <alternativeName>
        <fullName evidence="1">Tripeptide aminopeptidase</fullName>
    </alternativeName>
</protein>
<name>PEPT_CLONN</name>
<comment type="function">
    <text evidence="1">Cleaves the N-terminal amino acid of tripeptides.</text>
</comment>
<comment type="catalytic activity">
    <reaction evidence="1">
        <text>Release of the N-terminal residue from a tripeptide.</text>
        <dbReference type="EC" id="3.4.11.4"/>
    </reaction>
</comment>
<comment type="cofactor">
    <cofactor evidence="1">
        <name>Zn(2+)</name>
        <dbReference type="ChEBI" id="CHEBI:29105"/>
    </cofactor>
    <text evidence="1">Binds 2 Zn(2+) ions per subunit.</text>
</comment>
<comment type="subcellular location">
    <subcellularLocation>
        <location evidence="1">Cytoplasm</location>
    </subcellularLocation>
</comment>
<comment type="similarity">
    <text evidence="1">Belongs to the peptidase M20B family.</text>
</comment>